<evidence type="ECO:0000250" key="1"/>
<evidence type="ECO:0000255" key="2"/>
<evidence type="ECO:0000256" key="3">
    <source>
        <dbReference type="SAM" id="MobiDB-lite"/>
    </source>
</evidence>
<evidence type="ECO:0000305" key="4"/>
<dbReference type="EC" id="1.15.1.1"/>
<dbReference type="EMBL" id="AP001389">
    <property type="protein sequence ID" value="BAD67766.1"/>
    <property type="molecule type" value="Genomic_DNA"/>
</dbReference>
<dbReference type="EMBL" id="AP002837">
    <property type="protein sequence ID" value="BAD67906.1"/>
    <property type="molecule type" value="Genomic_DNA"/>
</dbReference>
<dbReference type="EMBL" id="AP008212">
    <property type="protein sequence ID" value="BAF18526.1"/>
    <property type="molecule type" value="Genomic_DNA"/>
</dbReference>
<dbReference type="EMBL" id="AP014962">
    <property type="protein sequence ID" value="BAS95837.1"/>
    <property type="molecule type" value="Genomic_DNA"/>
</dbReference>
<dbReference type="EMBL" id="CM000143">
    <property type="protein sequence ID" value="EEE64982.1"/>
    <property type="molecule type" value="Genomic_DNA"/>
</dbReference>
<dbReference type="EMBL" id="AK111656">
    <property type="protein sequence ID" value="BAG99354.1"/>
    <property type="molecule type" value="mRNA"/>
</dbReference>
<dbReference type="RefSeq" id="XP_015641241.1">
    <property type="nucleotide sequence ID" value="XM_015785755.1"/>
</dbReference>
<dbReference type="SMR" id="Q5VRL3"/>
<dbReference type="FunCoup" id="Q5VRL3">
    <property type="interactions" value="142"/>
</dbReference>
<dbReference type="STRING" id="39947.Q5VRL3"/>
<dbReference type="PaxDb" id="39947-Q5VRL3"/>
<dbReference type="EnsemblPlants" id="Os06t0115400-01">
    <property type="protein sequence ID" value="Os06t0115400-01"/>
    <property type="gene ID" value="Os06g0115400"/>
</dbReference>
<dbReference type="Gramene" id="Os06t0115400-01">
    <property type="protein sequence ID" value="Os06t0115400-01"/>
    <property type="gene ID" value="Os06g0115400"/>
</dbReference>
<dbReference type="KEGG" id="dosa:Os06g0115400"/>
<dbReference type="eggNOG" id="KOG0876">
    <property type="taxonomic scope" value="Eukaryota"/>
</dbReference>
<dbReference type="HOGENOM" id="CLU_790772_0_0_1"/>
<dbReference type="InParanoid" id="Q5VRL3"/>
<dbReference type="OMA" id="LVWGHSD"/>
<dbReference type="OrthoDB" id="239262at2759"/>
<dbReference type="PlantReactome" id="R-OSA-1119403">
    <property type="pathway name" value="Removal of superoxide radicals"/>
</dbReference>
<dbReference type="Proteomes" id="UP000000763">
    <property type="component" value="Chromosome 6"/>
</dbReference>
<dbReference type="Proteomes" id="UP000007752">
    <property type="component" value="Chromosome 6"/>
</dbReference>
<dbReference type="Proteomes" id="UP000059680">
    <property type="component" value="Chromosome 6"/>
</dbReference>
<dbReference type="ExpressionAtlas" id="Q5VRL3">
    <property type="expression patterns" value="baseline and differential"/>
</dbReference>
<dbReference type="GO" id="GO:0042644">
    <property type="term" value="C:chloroplast nucleoid"/>
    <property type="evidence" value="ECO:0000318"/>
    <property type="project" value="GO_Central"/>
</dbReference>
<dbReference type="GO" id="GO:0046872">
    <property type="term" value="F:metal ion binding"/>
    <property type="evidence" value="ECO:0007669"/>
    <property type="project" value="UniProtKB-KW"/>
</dbReference>
<dbReference type="GO" id="GO:0004784">
    <property type="term" value="F:superoxide dismutase activity"/>
    <property type="evidence" value="ECO:0007669"/>
    <property type="project" value="UniProtKB-EC"/>
</dbReference>
<dbReference type="FunFam" id="1.10.287.990:FF:000002">
    <property type="entry name" value="Superoxide dismutase"/>
    <property type="match status" value="1"/>
</dbReference>
<dbReference type="FunFam" id="3.55.40.20:FF:000005">
    <property type="entry name" value="Superoxide dismutase"/>
    <property type="match status" value="1"/>
</dbReference>
<dbReference type="Gene3D" id="1.10.287.990">
    <property type="entry name" value="Fe,Mn superoxide dismutase (SOD) domain"/>
    <property type="match status" value="1"/>
</dbReference>
<dbReference type="Gene3D" id="3.55.40.20">
    <property type="entry name" value="Iron/manganese superoxide dismutase, C-terminal domain"/>
    <property type="match status" value="1"/>
</dbReference>
<dbReference type="InterPro" id="IPR001189">
    <property type="entry name" value="Mn/Fe_SOD"/>
</dbReference>
<dbReference type="InterPro" id="IPR019833">
    <property type="entry name" value="Mn/Fe_SOD_BS"/>
</dbReference>
<dbReference type="InterPro" id="IPR019832">
    <property type="entry name" value="Mn/Fe_SOD_C"/>
</dbReference>
<dbReference type="InterPro" id="IPR019831">
    <property type="entry name" value="Mn/Fe_SOD_N"/>
</dbReference>
<dbReference type="InterPro" id="IPR036324">
    <property type="entry name" value="Mn/Fe_SOD_N_sf"/>
</dbReference>
<dbReference type="InterPro" id="IPR036314">
    <property type="entry name" value="SOD_C_sf"/>
</dbReference>
<dbReference type="PANTHER" id="PTHR42769">
    <property type="entry name" value="SUPEROXIDE DISMUTASE"/>
    <property type="match status" value="1"/>
</dbReference>
<dbReference type="PANTHER" id="PTHR42769:SF3">
    <property type="entry name" value="SUPEROXIDE DISMUTASE [FE] 2, CHLOROPLASTIC"/>
    <property type="match status" value="1"/>
</dbReference>
<dbReference type="Pfam" id="PF02777">
    <property type="entry name" value="Sod_Fe_C"/>
    <property type="match status" value="1"/>
</dbReference>
<dbReference type="Pfam" id="PF00081">
    <property type="entry name" value="Sod_Fe_N"/>
    <property type="match status" value="1"/>
</dbReference>
<dbReference type="PRINTS" id="PR01703">
    <property type="entry name" value="MNSODISMTASE"/>
</dbReference>
<dbReference type="SUPFAM" id="SSF54719">
    <property type="entry name" value="Fe,Mn superoxide dismutase (SOD), C-terminal domain"/>
    <property type="match status" value="1"/>
</dbReference>
<dbReference type="SUPFAM" id="SSF46609">
    <property type="entry name" value="Fe,Mn superoxide dismutase (SOD), N-terminal domain"/>
    <property type="match status" value="1"/>
</dbReference>
<dbReference type="PROSITE" id="PS00088">
    <property type="entry name" value="SOD_MN"/>
    <property type="match status" value="1"/>
</dbReference>
<comment type="function">
    <text evidence="1">Destroys superoxide anion radicals which are normally produced within the cells and which are toxic to biological systems.</text>
</comment>
<comment type="catalytic activity">
    <reaction>
        <text>2 superoxide + 2 H(+) = H2O2 + O2</text>
        <dbReference type="Rhea" id="RHEA:20696"/>
        <dbReference type="ChEBI" id="CHEBI:15378"/>
        <dbReference type="ChEBI" id="CHEBI:15379"/>
        <dbReference type="ChEBI" id="CHEBI:16240"/>
        <dbReference type="ChEBI" id="CHEBI:18421"/>
        <dbReference type="EC" id="1.15.1.1"/>
    </reaction>
</comment>
<comment type="cofactor">
    <cofactor evidence="1">
        <name>Fe cation</name>
        <dbReference type="ChEBI" id="CHEBI:24875"/>
    </cofactor>
    <text evidence="1">Binds 1 Fe cation per subunit.</text>
</comment>
<comment type="subunit">
    <text evidence="1">Homodimer.</text>
</comment>
<comment type="subcellular location">
    <subcellularLocation>
        <location evidence="1">Plastid</location>
        <location evidence="1">Chloroplast</location>
    </subcellularLocation>
</comment>
<comment type="similarity">
    <text evidence="4">Belongs to the iron/manganese superoxide dismutase family.</text>
</comment>
<organism>
    <name type="scientific">Oryza sativa subsp. japonica</name>
    <name type="common">Rice</name>
    <dbReference type="NCBI Taxonomy" id="39947"/>
    <lineage>
        <taxon>Eukaryota</taxon>
        <taxon>Viridiplantae</taxon>
        <taxon>Streptophyta</taxon>
        <taxon>Embryophyta</taxon>
        <taxon>Tracheophyta</taxon>
        <taxon>Spermatophyta</taxon>
        <taxon>Magnoliopsida</taxon>
        <taxon>Liliopsida</taxon>
        <taxon>Poales</taxon>
        <taxon>Poaceae</taxon>
        <taxon>BOP clade</taxon>
        <taxon>Oryzoideae</taxon>
        <taxon>Oryzeae</taxon>
        <taxon>Oryzinae</taxon>
        <taxon>Oryza</taxon>
        <taxon>Oryza sativa</taxon>
    </lineage>
</organism>
<feature type="transit peptide" description="Chloroplast" evidence="2">
    <location>
        <begin position="1"/>
        <end position="73"/>
    </location>
</feature>
<feature type="chain" id="PRO_0000421267" description="Superoxide dismutase [Fe] 1, chloroplastic">
    <location>
        <begin position="74"/>
        <end position="391"/>
    </location>
</feature>
<feature type="region of interest" description="Disordered" evidence="3">
    <location>
        <begin position="87"/>
        <end position="120"/>
    </location>
</feature>
<feature type="region of interest" description="Disordered" evidence="3">
    <location>
        <begin position="370"/>
        <end position="391"/>
    </location>
</feature>
<feature type="compositionally biased region" description="Acidic residues" evidence="3">
    <location>
        <begin position="87"/>
        <end position="119"/>
    </location>
</feature>
<feature type="compositionally biased region" description="Polar residues" evidence="3">
    <location>
        <begin position="381"/>
        <end position="391"/>
    </location>
</feature>
<feature type="binding site" evidence="1">
    <location>
        <position position="148"/>
    </location>
    <ligand>
        <name>Fe cation</name>
        <dbReference type="ChEBI" id="CHEBI:24875"/>
    </ligand>
</feature>
<feature type="binding site" evidence="1">
    <location>
        <position position="202"/>
    </location>
    <ligand>
        <name>Fe cation</name>
        <dbReference type="ChEBI" id="CHEBI:24875"/>
    </ligand>
</feature>
<feature type="binding site" evidence="1">
    <location>
        <position position="301"/>
    </location>
    <ligand>
        <name>Fe cation</name>
        <dbReference type="ChEBI" id="CHEBI:24875"/>
    </ligand>
</feature>
<feature type="binding site" evidence="1">
    <location>
        <position position="305"/>
    </location>
    <ligand>
        <name>Fe cation</name>
        <dbReference type="ChEBI" id="CHEBI:24875"/>
    </ligand>
</feature>
<keyword id="KW-0150">Chloroplast</keyword>
<keyword id="KW-0408">Iron</keyword>
<keyword id="KW-0479">Metal-binding</keyword>
<keyword id="KW-0560">Oxidoreductase</keyword>
<keyword id="KW-0934">Plastid</keyword>
<keyword id="KW-1185">Reference proteome</keyword>
<keyword id="KW-0809">Transit peptide</keyword>
<protein>
    <recommendedName>
        <fullName>Superoxide dismutase [Fe] 1, chloroplastic</fullName>
        <ecNumber>1.15.1.1</ecNumber>
    </recommendedName>
</protein>
<accession>Q5VRL3</accession>
<accession>A0A0P0WSA4</accession>
<gene>
    <name type="ordered locus">Os06g0115400</name>
    <name type="ordered locus">LOC_Os06g02500</name>
    <name type="ORF">OsJ_19901</name>
    <name type="ORF">OSJNBa0019F11.15-1</name>
    <name type="ORF">P0541H01.37-1</name>
</gene>
<proteinExistence type="evidence at transcript level"/>
<sequence>MAFATLVGVGGLSPALFSPSRPLSCSSSTSVSAPFILRAGGGGDARRHGLRRLVTPLRGSACRGESTNSRVLQCANEANVVTEDDIVNDGIDDETASDAEMDEDAEANGDESSGTDEDASVSWIEQQPLPYPSDALEPYISKETVEQHWGVHQNIHVERLNGMIGGSEWEGMSLGQMMLSSFNEGREAPHPPFFHAAQIWNHDFYWRSMQPGGGGKPPERLLKFINRDFGSYDGMIRQFMDAASTQFGSGWVWLCYKTSKLPHVKSRSPIPSDNYGRLVISKSPNAINPLVWGHSPLLAIDLWEHAYYLDYEDRRSDYVSTFLEKLVSWETVESRLKKAVQRAVERDEYVSTKHIRKQLLARAKSQIRAMPQQVNGDAREQTSGQEKSLGV</sequence>
<reference key="1">
    <citation type="journal article" date="2005" name="Nature">
        <title>The map-based sequence of the rice genome.</title>
        <authorList>
            <consortium name="International rice genome sequencing project (IRGSP)"/>
        </authorList>
    </citation>
    <scope>NUCLEOTIDE SEQUENCE [LARGE SCALE GENOMIC DNA]</scope>
    <source>
        <strain>cv. Nipponbare</strain>
    </source>
</reference>
<reference key="2">
    <citation type="journal article" date="2008" name="Nucleic Acids Res.">
        <title>The rice annotation project database (RAP-DB): 2008 update.</title>
        <authorList>
            <consortium name="The rice annotation project (RAP)"/>
        </authorList>
    </citation>
    <scope>GENOME REANNOTATION</scope>
    <source>
        <strain>cv. Nipponbare</strain>
    </source>
</reference>
<reference key="3">
    <citation type="journal article" date="2013" name="Rice">
        <title>Improvement of the Oryza sativa Nipponbare reference genome using next generation sequence and optical map data.</title>
        <authorList>
            <person name="Kawahara Y."/>
            <person name="de la Bastide M."/>
            <person name="Hamilton J.P."/>
            <person name="Kanamori H."/>
            <person name="McCombie W.R."/>
            <person name="Ouyang S."/>
            <person name="Schwartz D.C."/>
            <person name="Tanaka T."/>
            <person name="Wu J."/>
            <person name="Zhou S."/>
            <person name="Childs K.L."/>
            <person name="Davidson R.M."/>
            <person name="Lin H."/>
            <person name="Quesada-Ocampo L."/>
            <person name="Vaillancourt B."/>
            <person name="Sakai H."/>
            <person name="Lee S.S."/>
            <person name="Kim J."/>
            <person name="Numa H."/>
            <person name="Itoh T."/>
            <person name="Buell C.R."/>
            <person name="Matsumoto T."/>
        </authorList>
    </citation>
    <scope>GENOME REANNOTATION</scope>
    <source>
        <strain>cv. Nipponbare</strain>
    </source>
</reference>
<reference key="4">
    <citation type="journal article" date="2005" name="PLoS Biol.">
        <title>The genomes of Oryza sativa: a history of duplications.</title>
        <authorList>
            <person name="Yu J."/>
            <person name="Wang J."/>
            <person name="Lin W."/>
            <person name="Li S."/>
            <person name="Li H."/>
            <person name="Zhou J."/>
            <person name="Ni P."/>
            <person name="Dong W."/>
            <person name="Hu S."/>
            <person name="Zeng C."/>
            <person name="Zhang J."/>
            <person name="Zhang Y."/>
            <person name="Li R."/>
            <person name="Xu Z."/>
            <person name="Li S."/>
            <person name="Li X."/>
            <person name="Zheng H."/>
            <person name="Cong L."/>
            <person name="Lin L."/>
            <person name="Yin J."/>
            <person name="Geng J."/>
            <person name="Li G."/>
            <person name="Shi J."/>
            <person name="Liu J."/>
            <person name="Lv H."/>
            <person name="Li J."/>
            <person name="Wang J."/>
            <person name="Deng Y."/>
            <person name="Ran L."/>
            <person name="Shi X."/>
            <person name="Wang X."/>
            <person name="Wu Q."/>
            <person name="Li C."/>
            <person name="Ren X."/>
            <person name="Wang J."/>
            <person name="Wang X."/>
            <person name="Li D."/>
            <person name="Liu D."/>
            <person name="Zhang X."/>
            <person name="Ji Z."/>
            <person name="Zhao W."/>
            <person name="Sun Y."/>
            <person name="Zhang Z."/>
            <person name="Bao J."/>
            <person name="Han Y."/>
            <person name="Dong L."/>
            <person name="Ji J."/>
            <person name="Chen P."/>
            <person name="Wu S."/>
            <person name="Liu J."/>
            <person name="Xiao Y."/>
            <person name="Bu D."/>
            <person name="Tan J."/>
            <person name="Yang L."/>
            <person name="Ye C."/>
            <person name="Zhang J."/>
            <person name="Xu J."/>
            <person name="Zhou Y."/>
            <person name="Yu Y."/>
            <person name="Zhang B."/>
            <person name="Zhuang S."/>
            <person name="Wei H."/>
            <person name="Liu B."/>
            <person name="Lei M."/>
            <person name="Yu H."/>
            <person name="Li Y."/>
            <person name="Xu H."/>
            <person name="Wei S."/>
            <person name="He X."/>
            <person name="Fang L."/>
            <person name="Zhang Z."/>
            <person name="Zhang Y."/>
            <person name="Huang X."/>
            <person name="Su Z."/>
            <person name="Tong W."/>
            <person name="Li J."/>
            <person name="Tong Z."/>
            <person name="Li S."/>
            <person name="Ye J."/>
            <person name="Wang L."/>
            <person name="Fang L."/>
            <person name="Lei T."/>
            <person name="Chen C.-S."/>
            <person name="Chen H.-C."/>
            <person name="Xu Z."/>
            <person name="Li H."/>
            <person name="Huang H."/>
            <person name="Zhang F."/>
            <person name="Xu H."/>
            <person name="Li N."/>
            <person name="Zhao C."/>
            <person name="Li S."/>
            <person name="Dong L."/>
            <person name="Huang Y."/>
            <person name="Li L."/>
            <person name="Xi Y."/>
            <person name="Qi Q."/>
            <person name="Li W."/>
            <person name="Zhang B."/>
            <person name="Hu W."/>
            <person name="Zhang Y."/>
            <person name="Tian X."/>
            <person name="Jiao Y."/>
            <person name="Liang X."/>
            <person name="Jin J."/>
            <person name="Gao L."/>
            <person name="Zheng W."/>
            <person name="Hao B."/>
            <person name="Liu S.-M."/>
            <person name="Wang W."/>
            <person name="Yuan L."/>
            <person name="Cao M."/>
            <person name="McDermott J."/>
            <person name="Samudrala R."/>
            <person name="Wang J."/>
            <person name="Wong G.K.-S."/>
            <person name="Yang H."/>
        </authorList>
    </citation>
    <scope>NUCLEOTIDE SEQUENCE [LARGE SCALE GENOMIC DNA]</scope>
    <source>
        <strain>cv. Nipponbare</strain>
    </source>
</reference>
<reference key="5">
    <citation type="journal article" date="2003" name="Science">
        <title>Collection, mapping, and annotation of over 28,000 cDNA clones from japonica rice.</title>
        <authorList>
            <consortium name="The rice full-length cDNA consortium"/>
        </authorList>
    </citation>
    <scope>NUCLEOTIDE SEQUENCE [LARGE SCALE MRNA]</scope>
    <source>
        <strain>cv. Nipponbare</strain>
    </source>
</reference>
<name>SODF1_ORYSJ</name>